<keyword id="KW-0997">Cell inner membrane</keyword>
<keyword id="KW-1003">Cell membrane</keyword>
<keyword id="KW-0472">Membrane</keyword>
<keyword id="KW-0534">Nitrate assimilation</keyword>
<keyword id="KW-1185">Reference proteome</keyword>
<keyword id="KW-0812">Transmembrane</keyword>
<keyword id="KW-1133">Transmembrane helix</keyword>
<keyword id="KW-0813">Transport</keyword>
<comment type="function">
    <text evidence="2">High-efficiency transport system for both nitrate and nitrite.</text>
</comment>
<comment type="subcellular location">
    <subcellularLocation>
        <location evidence="5">Cell inner membrane</location>
        <topology evidence="1">Multi-pass membrane protein</topology>
    </subcellularLocation>
</comment>
<comment type="induction">
    <text evidence="2">Transcribed in nitrate-grown cells, but not in cells grown on urea or ammonia. Transcription is probably controlled by the global nitrogen regulator NtcA.</text>
</comment>
<comment type="disruption phenotype">
    <text evidence="2">Mutant can still grow on nitrate, but it has a lower capacity for nitrate utilization, which limits the growth of the cells. Mutant cannot consume nitrite as rapidly as the wild type cells at pH 10.</text>
</comment>
<comment type="similarity">
    <text evidence="4">Belongs to the major facilitator superfamily. Nitrate/nitrite porter (TC 2.A.1.8) family.</text>
</comment>
<comment type="sequence caution" evidence="4">
    <conflict type="erroneous initiation">
        <sequence resource="EMBL-CDS" id="ACA99310"/>
    </conflict>
    <text>Truncated N-terminus.</text>
</comment>
<reference key="1">
    <citation type="journal article" date="1999" name="J. Bacteriol.">
        <title>A novel nitrate/nitrite permease in the marine Cyanobacterium synechococcus sp. strain PCC 7002.</title>
        <authorList>
            <person name="Sakamoto T."/>
            <person name="Inoue-Sakamoto K."/>
            <person name="Bryant D.A."/>
        </authorList>
    </citation>
    <scope>NUCLEOTIDE SEQUENCE [GENOMIC DNA]</scope>
    <scope>FUNCTION AS A PERMEASE</scope>
    <scope>SUBCELLULAR LOCATION</scope>
    <scope>INDUCTION</scope>
    <scope>DISRUPTION PHENOTYPE</scope>
    <source>
        <strain>ATCC 27264 / PCC 7002 / PR-6</strain>
    </source>
</reference>
<reference key="2">
    <citation type="submission" date="2008-02" db="EMBL/GenBank/DDBJ databases">
        <title>Complete sequence of Synechococcus sp. PCC 7002.</title>
        <authorList>
            <person name="Li T."/>
            <person name="Zhao J."/>
            <person name="Zhao C."/>
            <person name="Liu Z."/>
            <person name="Zhao F."/>
            <person name="Marquardt J."/>
            <person name="Nomura C.T."/>
            <person name="Persson S."/>
            <person name="Detter J.C."/>
            <person name="Richardson P.M."/>
            <person name="Lanz C."/>
            <person name="Schuster S.C."/>
            <person name="Wang J."/>
            <person name="Li S."/>
            <person name="Huang X."/>
            <person name="Cai T."/>
            <person name="Yu Z."/>
            <person name="Luo J."/>
            <person name="Zhao J."/>
            <person name="Bryant D.A."/>
        </authorList>
    </citation>
    <scope>NUCLEOTIDE SEQUENCE [LARGE SCALE GENOMIC DNA]</scope>
    <source>
        <strain>ATCC 27264 / PCC 7002 / PR-6</strain>
    </source>
</reference>
<organism>
    <name type="scientific">Picosynechococcus sp. (strain ATCC 27264 / PCC 7002 / PR-6)</name>
    <name type="common">Agmenellum quadruplicatum</name>
    <dbReference type="NCBI Taxonomy" id="32049"/>
    <lineage>
        <taxon>Bacteria</taxon>
        <taxon>Bacillati</taxon>
        <taxon>Cyanobacteriota</taxon>
        <taxon>Cyanophyceae</taxon>
        <taxon>Oscillatoriophycideae</taxon>
        <taxon>Chroococcales</taxon>
        <taxon>Geminocystaceae</taxon>
        <taxon>Picosynechococcus</taxon>
    </lineage>
</organism>
<evidence type="ECO:0000255" key="1"/>
<evidence type="ECO:0000269" key="2">
    <source>
    </source>
</evidence>
<evidence type="ECO:0000303" key="3">
    <source>
    </source>
</evidence>
<evidence type="ECO:0000305" key="4"/>
<evidence type="ECO:0000305" key="5">
    <source>
    </source>
</evidence>
<evidence type="ECO:0000312" key="6">
    <source>
        <dbReference type="EMBL" id="ACA99310.1"/>
    </source>
</evidence>
<sequence length="534" mass="58153">MLGEMWSFNGRYKILHMTWFAFFLSFVVWFNFPPFATTIAQDFGLDKAQLGTIGLCNVALTVPARIIIGMLLDKYGPRLTYSLLLIYAAVPCLIFATAQSFNQLVLGRLLMGIVGAGFVIGIRMVAEWFPPKDVGTAEGIYGGWGNFGSAFSAFTMVIFGIILAFLPGAFNFGQPESFKILFFPEFNTAILNWRAAIAGTGIIAALYGMLYYFSVSDTPPGKTYHRPKSARGMEVTTKKDFWFLLAMNLPLTLILMVLAWRLQKVNFLNGTGFAIAILALVGLYLFQTYNCWTVNKDLMTGKKRYAPEDRYEFSQVAILELTYIVNFGSELAVVTMLPAFFEGTFSLDKATAGIIASSYAFMNLMSRPGGGLISDKMGSRKWTMVVLTVGMGVGYLLMSSVAGTWPLAIAVLLTMACSFFVQAAEGSTFAIVPLVKRRITGQIAGNVGAYGNVGAVAYLTVLLLLTEASAGANGGEPVMATVNAGFFQVLGITGLIVAFLCAFFLKEPKGSFAEFHEGETEMTATPPIEEEATY</sequence>
<protein>
    <recommendedName>
        <fullName evidence="4">Nitrate/nitrite transporter NrtP</fullName>
    </recommendedName>
    <alternativeName>
        <fullName evidence="3">Nitrate/nitrite permease</fullName>
    </alternativeName>
</protein>
<proteinExistence type="evidence at protein level"/>
<accession>B1XLL7</accession>
<accession>Q9R6U5</accession>
<feature type="chain" id="PRO_0000439862" description="Nitrate/nitrite transporter NrtP">
    <location>
        <begin position="1"/>
        <end position="534"/>
    </location>
</feature>
<feature type="transmembrane region" description="Helical" evidence="1">
    <location>
        <begin position="19"/>
        <end position="39"/>
    </location>
</feature>
<feature type="transmembrane region" description="Helical" evidence="1">
    <location>
        <begin position="52"/>
        <end position="72"/>
    </location>
</feature>
<feature type="transmembrane region" description="Helical" evidence="1">
    <location>
        <begin position="79"/>
        <end position="99"/>
    </location>
</feature>
<feature type="transmembrane region" description="Helical" evidence="1">
    <location>
        <begin position="109"/>
        <end position="129"/>
    </location>
</feature>
<feature type="transmembrane region" description="Helical" evidence="1">
    <location>
        <begin position="150"/>
        <end position="170"/>
    </location>
</feature>
<feature type="transmembrane region" description="Helical" evidence="1">
    <location>
        <begin position="195"/>
        <end position="215"/>
    </location>
</feature>
<feature type="transmembrane region" description="Helical" evidence="1">
    <location>
        <begin position="240"/>
        <end position="260"/>
    </location>
</feature>
<feature type="transmembrane region" description="Helical" evidence="1">
    <location>
        <begin position="266"/>
        <end position="286"/>
    </location>
</feature>
<feature type="transmembrane region" description="Helical" evidence="1">
    <location>
        <begin position="382"/>
        <end position="404"/>
    </location>
</feature>
<feature type="transmembrane region" description="Helical" evidence="1">
    <location>
        <begin position="409"/>
        <end position="431"/>
    </location>
</feature>
<feature type="transmembrane region" description="Helical" evidence="1">
    <location>
        <begin position="445"/>
        <end position="465"/>
    </location>
</feature>
<feature type="transmembrane region" description="Helical" evidence="1">
    <location>
        <begin position="485"/>
        <end position="505"/>
    </location>
</feature>
<name>NRTP_PICP2</name>
<dbReference type="EMBL" id="AF089813">
    <property type="protein sequence ID" value="AAD45941.1"/>
    <property type="molecule type" value="Genomic_DNA"/>
</dbReference>
<dbReference type="EMBL" id="CP000951">
    <property type="protein sequence ID" value="ACA99310.1"/>
    <property type="status" value="ALT_INIT"/>
    <property type="molecule type" value="Genomic_DNA"/>
</dbReference>
<dbReference type="RefSeq" id="WP_041443465.1">
    <property type="nucleotide sequence ID" value="NC_010475.1"/>
</dbReference>
<dbReference type="STRING" id="32049.SYNPCC7002_A1313"/>
<dbReference type="TCDB" id="2.A.1.8.3">
    <property type="family name" value="the major facilitator superfamily (mfs)"/>
</dbReference>
<dbReference type="KEGG" id="syp:SYNPCC7002_A1313"/>
<dbReference type="eggNOG" id="COG2223">
    <property type="taxonomic scope" value="Bacteria"/>
</dbReference>
<dbReference type="HOGENOM" id="CLU_024204_4_1_3"/>
<dbReference type="Proteomes" id="UP000001688">
    <property type="component" value="Chromosome"/>
</dbReference>
<dbReference type="GO" id="GO:0005886">
    <property type="term" value="C:plasma membrane"/>
    <property type="evidence" value="ECO:0007669"/>
    <property type="project" value="UniProtKB-SubCell"/>
</dbReference>
<dbReference type="GO" id="GO:0015112">
    <property type="term" value="F:nitrate transmembrane transporter activity"/>
    <property type="evidence" value="ECO:0000315"/>
    <property type="project" value="UniProtKB"/>
</dbReference>
<dbReference type="GO" id="GO:0015113">
    <property type="term" value="F:nitrite transmembrane transporter activity"/>
    <property type="evidence" value="ECO:0000315"/>
    <property type="project" value="UniProtKB"/>
</dbReference>
<dbReference type="GO" id="GO:0042128">
    <property type="term" value="P:nitrate assimilation"/>
    <property type="evidence" value="ECO:0007669"/>
    <property type="project" value="UniProtKB-KW"/>
</dbReference>
<dbReference type="GO" id="GO:1902025">
    <property type="term" value="P:nitrate import"/>
    <property type="evidence" value="ECO:0000315"/>
    <property type="project" value="UniProtKB"/>
</dbReference>
<dbReference type="GO" id="GO:0015707">
    <property type="term" value="P:nitrite transport"/>
    <property type="evidence" value="ECO:0000315"/>
    <property type="project" value="UniProtKB"/>
</dbReference>
<dbReference type="FunFam" id="1.20.1250.20:FF:000053">
    <property type="entry name" value="Nitrate transporter 2.1"/>
    <property type="match status" value="1"/>
</dbReference>
<dbReference type="FunFam" id="1.20.1250.20:FF:001468">
    <property type="entry name" value="Nitrate/nitrite transporter NrtP"/>
    <property type="match status" value="1"/>
</dbReference>
<dbReference type="Gene3D" id="1.20.1250.20">
    <property type="entry name" value="MFS general substrate transporter like domains"/>
    <property type="match status" value="2"/>
</dbReference>
<dbReference type="InterPro" id="IPR011701">
    <property type="entry name" value="MFS"/>
</dbReference>
<dbReference type="InterPro" id="IPR020846">
    <property type="entry name" value="MFS_dom"/>
</dbReference>
<dbReference type="InterPro" id="IPR036259">
    <property type="entry name" value="MFS_trans_sf"/>
</dbReference>
<dbReference type="InterPro" id="IPR044772">
    <property type="entry name" value="NO3_transporter"/>
</dbReference>
<dbReference type="InterPro" id="IPR004737">
    <property type="entry name" value="NO3_transporter_NarK/NarU-like"/>
</dbReference>
<dbReference type="NCBIfam" id="TIGR00886">
    <property type="entry name" value="2A0108"/>
    <property type="match status" value="1"/>
</dbReference>
<dbReference type="PANTHER" id="PTHR23515">
    <property type="entry name" value="HIGH-AFFINITY NITRATE TRANSPORTER 2.3"/>
    <property type="match status" value="1"/>
</dbReference>
<dbReference type="Pfam" id="PF07690">
    <property type="entry name" value="MFS_1"/>
    <property type="match status" value="2"/>
</dbReference>
<dbReference type="SUPFAM" id="SSF103473">
    <property type="entry name" value="MFS general substrate transporter"/>
    <property type="match status" value="1"/>
</dbReference>
<dbReference type="PROSITE" id="PS50850">
    <property type="entry name" value="MFS"/>
    <property type="match status" value="1"/>
</dbReference>
<gene>
    <name evidence="3" type="primary">nrtP</name>
    <name evidence="6" type="synonym">narK</name>
    <name evidence="6" type="ordered locus">SYNPCC7002_A1313</name>
</gene>